<comment type="function">
    <text evidence="1">May act as a substrate-specific adapter of an E3 ubiquitin-protein ligase complex (CUL3-RBX1-BTB) which mediates the ubiquitination and subsequent proteasomal degradation of target proteins.</text>
</comment>
<comment type="pathway">
    <text>Protein modification; protein ubiquitination.</text>
</comment>
<comment type="alternative products">
    <event type="alternative splicing"/>
    <isoform>
        <id>Q9FKB6-1</id>
        <name>1</name>
        <sequence type="displayed"/>
    </isoform>
    <isoform>
        <id>Q9FKB6-2</id>
        <name>2</name>
        <sequence type="described" ref="VSP_030534 VSP_030535"/>
    </isoform>
</comment>
<comment type="domain">
    <text evidence="7">The BTB/POZ domain mediates the interaction with some component of ubiquitin ligase complexes.</text>
</comment>
<comment type="similarity">
    <text evidence="5">Belongs to the NPH3 family.</text>
</comment>
<comment type="sequence caution" evidence="9">
    <conflict type="miscellaneous discrepancy">
        <sequence resource="EMBL" id="BX830207"/>
    </conflict>
    <text>Sequencing errors.</text>
</comment>
<organism>
    <name type="scientific">Arabidopsis thaliana</name>
    <name type="common">Mouse-ear cress</name>
    <dbReference type="NCBI Taxonomy" id="3702"/>
    <lineage>
        <taxon>Eukaryota</taxon>
        <taxon>Viridiplantae</taxon>
        <taxon>Streptophyta</taxon>
        <taxon>Embryophyta</taxon>
        <taxon>Tracheophyta</taxon>
        <taxon>Spermatophyta</taxon>
        <taxon>Magnoliopsida</taxon>
        <taxon>eudicotyledons</taxon>
        <taxon>Gunneridae</taxon>
        <taxon>Pentapetalae</taxon>
        <taxon>rosids</taxon>
        <taxon>malvids</taxon>
        <taxon>Brassicales</taxon>
        <taxon>Brassicaceae</taxon>
        <taxon>Camelineae</taxon>
        <taxon>Arabidopsis</taxon>
    </lineage>
</organism>
<sequence length="614" mass="69549">MDKHHHQHLLLQHHQHLHHHQKLSLAKSSRQSCSEWIFRDVPSDITIEVNGGNFALHKFPLVSRSGRIRRIVAEHRDSDISKVELLNLPGGAETFELAAKFCYGINFEITSSNVAQLFCVSDYLEMTEEYSKDNLASRTEEYLESIVCKNLEMCVQVLKQSEILLPLADELNIIGRCIDAIASKACAEQIASSFSRLEYSSSGRLHMSRQVKSSGDGGDWWIEDLSVLRIDLYQRVMNAMKCRGVRPESIGASLVSYAERELTKRSEHEQTIVETIVTLLPVENLVVPISFLFGLLRRAVILDTSVSCRLDLERRLGSQLDMATLDDLLIPSFRHAGDTLFDIDTVHRILVNFSQQGGDDSEDEESVFECDSPHSPSQTAMFKVAKLVDSYLAEIAPDANLDLSKFLLIAEALPPHARTLHDGLYRAIDLYLKAHQGLSDSDKKKLSKLIDFQKLSQEAGAHAAQNERLPLQSIVQVLYFEQLKLRSSLCSSYSDEEPKPKQQQQQSWRINSGALSATMSPKDNYASLRRENRELKLELARLRMRLNDLEKEHICMKRDMQRSHSRKFMSSFSKKMGKLSFFGHSSSRGSSSPSKQSFRTDSKVLMERTCASTD</sequence>
<reference key="1">
    <citation type="journal article" date="1998" name="DNA Res.">
        <title>Structural analysis of Arabidopsis thaliana chromosome 5. VI. Sequence features of the regions of 1,367,185 bp covered by 19 physically assigned P1 and TAC clones.</title>
        <authorList>
            <person name="Kotani H."/>
            <person name="Nakamura Y."/>
            <person name="Sato S."/>
            <person name="Asamizu E."/>
            <person name="Kaneko T."/>
            <person name="Miyajima N."/>
            <person name="Tabata S."/>
        </authorList>
    </citation>
    <scope>NUCLEOTIDE SEQUENCE [LARGE SCALE GENOMIC DNA]</scope>
    <source>
        <strain>cv. Columbia</strain>
    </source>
</reference>
<reference key="2">
    <citation type="journal article" date="2017" name="Plant J.">
        <title>Araport11: a complete reannotation of the Arabidopsis thaliana reference genome.</title>
        <authorList>
            <person name="Cheng C.Y."/>
            <person name="Krishnakumar V."/>
            <person name="Chan A.P."/>
            <person name="Thibaud-Nissen F."/>
            <person name="Schobel S."/>
            <person name="Town C.D."/>
        </authorList>
    </citation>
    <scope>GENOME REANNOTATION</scope>
    <source>
        <strain>cv. Columbia</strain>
    </source>
</reference>
<reference key="3">
    <citation type="journal article" date="2002" name="Science">
        <title>Functional annotation of a full-length Arabidopsis cDNA collection.</title>
        <authorList>
            <person name="Seki M."/>
            <person name="Narusaka M."/>
            <person name="Kamiya A."/>
            <person name="Ishida J."/>
            <person name="Satou M."/>
            <person name="Sakurai T."/>
            <person name="Nakajima M."/>
            <person name="Enju A."/>
            <person name="Akiyama K."/>
            <person name="Oono Y."/>
            <person name="Muramatsu M."/>
            <person name="Hayashizaki Y."/>
            <person name="Kawai J."/>
            <person name="Carninci P."/>
            <person name="Itoh M."/>
            <person name="Ishii Y."/>
            <person name="Arakawa T."/>
            <person name="Shibata K."/>
            <person name="Shinagawa A."/>
            <person name="Shinozaki K."/>
        </authorList>
    </citation>
    <scope>NUCLEOTIDE SEQUENCE [LARGE SCALE MRNA] (ISOFORM 2)</scope>
    <source>
        <strain>cv. Columbia</strain>
    </source>
</reference>
<reference key="4">
    <citation type="journal article" date="2004" name="Genome Res.">
        <title>Whole genome sequence comparisons and 'full-length' cDNA sequences: a combined approach to evaluate and improve Arabidopsis genome annotation.</title>
        <authorList>
            <person name="Castelli V."/>
            <person name="Aury J.-M."/>
            <person name="Jaillon O."/>
            <person name="Wincker P."/>
            <person name="Clepet C."/>
            <person name="Menard M."/>
            <person name="Cruaud C."/>
            <person name="Quetier F."/>
            <person name="Scarpelli C."/>
            <person name="Schaechter V."/>
            <person name="Temple G."/>
            <person name="Caboche M."/>
            <person name="Weissenbach J."/>
            <person name="Salanoubat M."/>
        </authorList>
    </citation>
    <scope>NUCLEOTIDE SEQUENCE [LARGE SCALE MRNA] (ISOFORM 1)</scope>
    <source>
        <strain>cv. Columbia</strain>
    </source>
</reference>
<reference key="5">
    <citation type="journal article" date="2005" name="J. Biol. Chem.">
        <title>Cullins 3a and 3b assemble with members of the broad complex/tramtrack/bric-a-brac (BTB) protein family to form essential ubiquitin-protein ligases (E3s) in Arabidopsis.</title>
        <authorList>
            <person name="Gingerich D.J."/>
            <person name="Gagne J.M."/>
            <person name="Salter D.W."/>
            <person name="Hellmann H."/>
            <person name="Estelle M."/>
            <person name="Ma L."/>
            <person name="Vierstra R.D."/>
        </authorList>
    </citation>
    <scope>DOMAIN BTB</scope>
</reference>
<feature type="chain" id="PRO_0000315353" description="BTB/POZ domain-containing protein At5g48800">
    <location>
        <begin position="1"/>
        <end position="614"/>
    </location>
</feature>
<feature type="domain" description="BTB" evidence="4">
    <location>
        <begin position="43"/>
        <end position="111"/>
    </location>
</feature>
<feature type="domain" description="NPH3" evidence="5">
    <location>
        <begin position="219"/>
        <end position="484"/>
    </location>
</feature>
<feature type="region of interest" description="Disordered" evidence="6">
    <location>
        <begin position="492"/>
        <end position="525"/>
    </location>
</feature>
<feature type="region of interest" description="Disordered" evidence="6">
    <location>
        <begin position="583"/>
        <end position="614"/>
    </location>
</feature>
<feature type="coiled-coil region" evidence="3">
    <location>
        <begin position="522"/>
        <end position="562"/>
    </location>
</feature>
<feature type="compositionally biased region" description="Polar residues" evidence="6">
    <location>
        <begin position="507"/>
        <end position="521"/>
    </location>
</feature>
<feature type="compositionally biased region" description="Low complexity" evidence="6">
    <location>
        <begin position="583"/>
        <end position="597"/>
    </location>
</feature>
<feature type="modified residue" description="Phosphotyrosine" evidence="2">
    <location>
        <position position="425"/>
    </location>
</feature>
<feature type="splice variant" id="VSP_030534" description="In isoform 2." evidence="8">
    <original>LGSQLD</original>
    <variation>RHFVR</variation>
    <location>
        <begin position="316"/>
        <end position="321"/>
    </location>
</feature>
<feature type="splice variant" id="VSP_030535" description="In isoform 2." evidence="8">
    <location>
        <begin position="322"/>
        <end position="614"/>
    </location>
</feature>
<protein>
    <recommendedName>
        <fullName>BTB/POZ domain-containing protein At5g48800</fullName>
    </recommendedName>
</protein>
<accession>Q9FKB6</accession>
<accession>Q8GZ23</accession>
<evidence type="ECO:0000250" key="1"/>
<evidence type="ECO:0000250" key="2">
    <source>
        <dbReference type="UniProtKB" id="Q9FMF5"/>
    </source>
</evidence>
<evidence type="ECO:0000255" key="3"/>
<evidence type="ECO:0000255" key="4">
    <source>
        <dbReference type="PROSITE-ProRule" id="PRU00037"/>
    </source>
</evidence>
<evidence type="ECO:0000255" key="5">
    <source>
        <dbReference type="PROSITE-ProRule" id="PRU00982"/>
    </source>
</evidence>
<evidence type="ECO:0000256" key="6">
    <source>
        <dbReference type="SAM" id="MobiDB-lite"/>
    </source>
</evidence>
<evidence type="ECO:0000269" key="7">
    <source>
    </source>
</evidence>
<evidence type="ECO:0000303" key="8">
    <source>
    </source>
</evidence>
<evidence type="ECO:0000305" key="9"/>
<gene>
    <name type="ordered locus">At5g48800</name>
    <name type="ORF">K24G6.13</name>
</gene>
<dbReference type="EMBL" id="AB012242">
    <property type="protein sequence ID" value="BAB09433.1"/>
    <property type="molecule type" value="Genomic_DNA"/>
</dbReference>
<dbReference type="EMBL" id="CP002688">
    <property type="protein sequence ID" value="AED95726.1"/>
    <property type="molecule type" value="Genomic_DNA"/>
</dbReference>
<dbReference type="EMBL" id="AK117251">
    <property type="protein sequence ID" value="BAC41926.1"/>
    <property type="molecule type" value="mRNA"/>
</dbReference>
<dbReference type="EMBL" id="BX830207">
    <property type="status" value="NOT_ANNOTATED_CDS"/>
    <property type="molecule type" value="mRNA"/>
</dbReference>
<dbReference type="RefSeq" id="NP_199691.1">
    <molecule id="Q9FKB6-1"/>
    <property type="nucleotide sequence ID" value="NM_124257.4"/>
</dbReference>
<dbReference type="SMR" id="Q9FKB6"/>
<dbReference type="FunCoup" id="Q9FKB6">
    <property type="interactions" value="29"/>
</dbReference>
<dbReference type="iPTMnet" id="Q9FKB6"/>
<dbReference type="PaxDb" id="3702-AT5G48800.1"/>
<dbReference type="ProteomicsDB" id="242881">
    <molecule id="Q9FKB6-1"/>
</dbReference>
<dbReference type="EnsemblPlants" id="AT5G48800.1">
    <molecule id="Q9FKB6-1"/>
    <property type="protein sequence ID" value="AT5G48800.1"/>
    <property type="gene ID" value="AT5G48800"/>
</dbReference>
<dbReference type="GeneID" id="834938"/>
<dbReference type="Gramene" id="AT5G48800.1">
    <molecule id="Q9FKB6-1"/>
    <property type="protein sequence ID" value="AT5G48800.1"/>
    <property type="gene ID" value="AT5G48800"/>
</dbReference>
<dbReference type="KEGG" id="ath:AT5G48800"/>
<dbReference type="Araport" id="AT5G48800"/>
<dbReference type="TAIR" id="AT5G48800"/>
<dbReference type="eggNOG" id="ENOG502R4F9">
    <property type="taxonomic scope" value="Eukaryota"/>
</dbReference>
<dbReference type="HOGENOM" id="CLU_005994_6_0_1"/>
<dbReference type="InParanoid" id="Q9FKB6"/>
<dbReference type="OMA" id="SHRTDSK"/>
<dbReference type="OrthoDB" id="624345at2759"/>
<dbReference type="PhylomeDB" id="Q9FKB6"/>
<dbReference type="UniPathway" id="UPA00143"/>
<dbReference type="PRO" id="PR:Q9FKB6"/>
<dbReference type="Proteomes" id="UP000006548">
    <property type="component" value="Chromosome 5"/>
</dbReference>
<dbReference type="ExpressionAtlas" id="Q9FKB6">
    <property type="expression patterns" value="baseline and differential"/>
</dbReference>
<dbReference type="GO" id="GO:0016567">
    <property type="term" value="P:protein ubiquitination"/>
    <property type="evidence" value="ECO:0007669"/>
    <property type="project" value="UniProtKB-UniPathway"/>
</dbReference>
<dbReference type="FunFam" id="3.30.710.10:FF:000210">
    <property type="entry name" value="BTB/POZ domain-containing protein SR1IP1"/>
    <property type="match status" value="1"/>
</dbReference>
<dbReference type="Gene3D" id="3.30.710.10">
    <property type="entry name" value="Potassium Channel Kv1.1, Chain A"/>
    <property type="match status" value="1"/>
</dbReference>
<dbReference type="InterPro" id="IPR000210">
    <property type="entry name" value="BTB/POZ_dom"/>
</dbReference>
<dbReference type="InterPro" id="IPR043454">
    <property type="entry name" value="NPH3/RPT2-like"/>
</dbReference>
<dbReference type="InterPro" id="IPR027356">
    <property type="entry name" value="NPH3_dom"/>
</dbReference>
<dbReference type="InterPro" id="IPR011333">
    <property type="entry name" value="SKP1/BTB/POZ_sf"/>
</dbReference>
<dbReference type="PANTHER" id="PTHR32370">
    <property type="entry name" value="OS12G0117600 PROTEIN"/>
    <property type="match status" value="1"/>
</dbReference>
<dbReference type="Pfam" id="PF00651">
    <property type="entry name" value="BTB"/>
    <property type="match status" value="1"/>
</dbReference>
<dbReference type="Pfam" id="PF03000">
    <property type="entry name" value="NPH3"/>
    <property type="match status" value="1"/>
</dbReference>
<dbReference type="SUPFAM" id="SSF54695">
    <property type="entry name" value="POZ domain"/>
    <property type="match status" value="1"/>
</dbReference>
<dbReference type="PROSITE" id="PS50097">
    <property type="entry name" value="BTB"/>
    <property type="match status" value="1"/>
</dbReference>
<dbReference type="PROSITE" id="PS51649">
    <property type="entry name" value="NPH3"/>
    <property type="match status" value="1"/>
</dbReference>
<proteinExistence type="evidence at transcript level"/>
<name>Y5880_ARATH</name>
<keyword id="KW-0025">Alternative splicing</keyword>
<keyword id="KW-0175">Coiled coil</keyword>
<keyword id="KW-0597">Phosphoprotein</keyword>
<keyword id="KW-1185">Reference proteome</keyword>
<keyword id="KW-0833">Ubl conjugation pathway</keyword>